<dbReference type="EC" id="1.5.1.3"/>
<dbReference type="EMBL" id="Z16422">
    <property type="protein sequence ID" value="CAA78910.1"/>
    <property type="molecule type" value="Genomic_DNA"/>
</dbReference>
<dbReference type="PIR" id="S32014">
    <property type="entry name" value="S32014"/>
</dbReference>
<dbReference type="RefSeq" id="WP_000175746.1">
    <property type="nucleotide sequence ID" value="NZ_WYDB01000002.1"/>
</dbReference>
<dbReference type="PDB" id="2W9G">
    <property type="method" value="X-ray"/>
    <property type="resolution" value="1.95 A"/>
    <property type="chains" value="A=1-159"/>
</dbReference>
<dbReference type="PDB" id="2W9H">
    <property type="method" value="X-ray"/>
    <property type="resolution" value="1.48 A"/>
    <property type="chains" value="A=1-159"/>
</dbReference>
<dbReference type="PDB" id="3FRA">
    <property type="method" value="X-ray"/>
    <property type="resolution" value="2.35 A"/>
    <property type="chains" value="X=2-159"/>
</dbReference>
<dbReference type="PDB" id="3FRB">
    <property type="method" value="X-ray"/>
    <property type="resolution" value="2.00 A"/>
    <property type="chains" value="X=2-159"/>
</dbReference>
<dbReference type="PDB" id="3FRD">
    <property type="method" value="X-ray"/>
    <property type="resolution" value="2.10 A"/>
    <property type="chains" value="X=2-159"/>
</dbReference>
<dbReference type="PDB" id="3FRE">
    <property type="method" value="X-ray"/>
    <property type="resolution" value="2.20 A"/>
    <property type="chains" value="X=2-159"/>
</dbReference>
<dbReference type="PDB" id="3FRF">
    <property type="method" value="X-ray"/>
    <property type="resolution" value="2.20 A"/>
    <property type="chains" value="X=2-159"/>
</dbReference>
<dbReference type="PDB" id="3FY8">
    <property type="method" value="X-ray"/>
    <property type="resolution" value="2.20 A"/>
    <property type="chains" value="X=2-159"/>
</dbReference>
<dbReference type="PDB" id="3FY9">
    <property type="method" value="X-ray"/>
    <property type="resolution" value="2.25 A"/>
    <property type="chains" value="X=2-159"/>
</dbReference>
<dbReference type="PDB" id="3FYV">
    <property type="method" value="X-ray"/>
    <property type="resolution" value="2.20 A"/>
    <property type="chains" value="X=2-159"/>
</dbReference>
<dbReference type="PDB" id="3FYW">
    <property type="method" value="X-ray"/>
    <property type="resolution" value="2.10 A"/>
    <property type="chains" value="X=2-159"/>
</dbReference>
<dbReference type="PDB" id="3I8A">
    <property type="method" value="X-ray"/>
    <property type="resolution" value="2.41 A"/>
    <property type="chains" value="X=2-158"/>
</dbReference>
<dbReference type="PDB" id="3LG4">
    <property type="method" value="X-ray"/>
    <property type="resolution" value="3.15 A"/>
    <property type="chains" value="A/B=1-158"/>
</dbReference>
<dbReference type="PDB" id="3M08">
    <property type="method" value="X-ray"/>
    <property type="resolution" value="2.01 A"/>
    <property type="chains" value="A=2-158"/>
</dbReference>
<dbReference type="PDB" id="3M09">
    <property type="method" value="X-ray"/>
    <property type="resolution" value="2.01 A"/>
    <property type="chains" value="A=2-158"/>
</dbReference>
<dbReference type="PDB" id="3SGY">
    <property type="method" value="X-ray"/>
    <property type="resolution" value="2.60 A"/>
    <property type="chains" value="A/B=2-158"/>
</dbReference>
<dbReference type="PDB" id="3SH2">
    <property type="method" value="X-ray"/>
    <property type="resolution" value="3.00 A"/>
    <property type="chains" value="A/B=2-158"/>
</dbReference>
<dbReference type="PDB" id="3SQY">
    <property type="method" value="X-ray"/>
    <property type="resolution" value="1.50 A"/>
    <property type="chains" value="X=1-159"/>
</dbReference>
<dbReference type="PDB" id="3SR5">
    <property type="method" value="X-ray"/>
    <property type="resolution" value="1.68 A"/>
    <property type="chains" value="X=2-159"/>
</dbReference>
<dbReference type="PDB" id="3SRQ">
    <property type="method" value="X-ray"/>
    <property type="resolution" value="1.69 A"/>
    <property type="chains" value="X=1-159"/>
</dbReference>
<dbReference type="PDB" id="3SRR">
    <property type="method" value="X-ray"/>
    <property type="resolution" value="1.70 A"/>
    <property type="chains" value="X=1-159"/>
</dbReference>
<dbReference type="PDB" id="3SRS">
    <property type="method" value="X-ray"/>
    <property type="resolution" value="1.70 A"/>
    <property type="chains" value="X=1-159"/>
</dbReference>
<dbReference type="PDB" id="3SRU">
    <property type="method" value="X-ray"/>
    <property type="resolution" value="1.70 A"/>
    <property type="chains" value="X=1-159"/>
</dbReference>
<dbReference type="PDB" id="3SRW">
    <property type="method" value="X-ray"/>
    <property type="resolution" value="1.70 A"/>
    <property type="chains" value="X=1-159"/>
</dbReference>
<dbReference type="PDB" id="4FGG">
    <property type="method" value="X-ray"/>
    <property type="resolution" value="2.30 A"/>
    <property type="chains" value="A=1-159"/>
</dbReference>
<dbReference type="PDB" id="4FGH">
    <property type="method" value="X-ray"/>
    <property type="resolution" value="2.50 A"/>
    <property type="chains" value="A=1-159"/>
</dbReference>
<dbReference type="PDB" id="4LAE">
    <property type="method" value="X-ray"/>
    <property type="resolution" value="1.69 A"/>
    <property type="chains" value="X=1-159"/>
</dbReference>
<dbReference type="PDB" id="4LAG">
    <property type="method" value="X-ray"/>
    <property type="resolution" value="1.70 A"/>
    <property type="chains" value="X=1-159"/>
</dbReference>
<dbReference type="PDB" id="4LAH">
    <property type="method" value="X-ray"/>
    <property type="resolution" value="1.88 A"/>
    <property type="chains" value="X=1-159"/>
</dbReference>
<dbReference type="PDB" id="4LEK">
    <property type="method" value="X-ray"/>
    <property type="resolution" value="1.70 A"/>
    <property type="chains" value="X=1-159"/>
</dbReference>
<dbReference type="PDB" id="4XE6">
    <property type="method" value="X-ray"/>
    <property type="resolution" value="2.69 A"/>
    <property type="chains" value="X=1-157"/>
</dbReference>
<dbReference type="PDB" id="4XEC">
    <property type="method" value="X-ray"/>
    <property type="resolution" value="2.69 A"/>
    <property type="chains" value="X=2-158"/>
</dbReference>
<dbReference type="PDB" id="5HF0">
    <property type="method" value="X-ray"/>
    <property type="resolution" value="2.25 A"/>
    <property type="chains" value="X=2-158"/>
</dbReference>
<dbReference type="PDB" id="5HF2">
    <property type="method" value="X-ray"/>
    <property type="resolution" value="1.81 A"/>
    <property type="chains" value="X=2-158"/>
</dbReference>
<dbReference type="PDB" id="5ISP">
    <property type="method" value="X-ray"/>
    <property type="resolution" value="1.84 A"/>
    <property type="chains" value="X=2-158"/>
</dbReference>
<dbReference type="PDB" id="5ISQ">
    <property type="method" value="X-ray"/>
    <property type="resolution" value="1.90 A"/>
    <property type="chains" value="X=2-158"/>
</dbReference>
<dbReference type="PDB" id="5IST">
    <property type="method" value="X-ray"/>
    <property type="resolution" value="1.72 A"/>
    <property type="chains" value="X=2-158"/>
</dbReference>
<dbReference type="PDB" id="5JG0">
    <property type="method" value="X-ray"/>
    <property type="resolution" value="1.88 A"/>
    <property type="chains" value="X=2-158"/>
</dbReference>
<dbReference type="PDB" id="6E4E">
    <property type="method" value="X-ray"/>
    <property type="resolution" value="1.90 A"/>
    <property type="chains" value="A=1-159"/>
</dbReference>
<dbReference type="PDB" id="6ND2">
    <property type="method" value="X-ray"/>
    <property type="resolution" value="2.24 A"/>
    <property type="chains" value="X=2-158"/>
</dbReference>
<dbReference type="PDB" id="6P9Z">
    <property type="method" value="X-ray"/>
    <property type="resolution" value="1.86 A"/>
    <property type="chains" value="X=2-158"/>
</dbReference>
<dbReference type="PDB" id="6PBO">
    <property type="method" value="X-ray"/>
    <property type="resolution" value="1.65 A"/>
    <property type="chains" value="X=2-158"/>
</dbReference>
<dbReference type="PDB" id="6PR6">
    <property type="method" value="X-ray"/>
    <property type="resolution" value="2.01 A"/>
    <property type="chains" value="A=1-159"/>
</dbReference>
<dbReference type="PDB" id="6PR7">
    <property type="method" value="X-ray"/>
    <property type="resolution" value="2.01 A"/>
    <property type="chains" value="A=1-159"/>
</dbReference>
<dbReference type="PDB" id="6PR8">
    <property type="method" value="X-ray"/>
    <property type="resolution" value="2.01 A"/>
    <property type="chains" value="A=2-159"/>
</dbReference>
<dbReference type="PDB" id="6PR9">
    <property type="method" value="X-ray"/>
    <property type="resolution" value="2.01 A"/>
    <property type="chains" value="A=2-159"/>
</dbReference>
<dbReference type="PDB" id="6PRA">
    <property type="method" value="X-ray"/>
    <property type="resolution" value="2.01 A"/>
    <property type="chains" value="A=1-159"/>
</dbReference>
<dbReference type="PDB" id="6PRB">
    <property type="method" value="X-ray"/>
    <property type="resolution" value="2.00 A"/>
    <property type="chains" value="A=2-159"/>
</dbReference>
<dbReference type="PDB" id="6PRD">
    <property type="method" value="X-ray"/>
    <property type="resolution" value="2.01 A"/>
    <property type="chains" value="A=2-159"/>
</dbReference>
<dbReference type="PDB" id="7T7Q">
    <property type="method" value="X-ray"/>
    <property type="resolution" value="2.20 A"/>
    <property type="chains" value="X=2-158"/>
</dbReference>
<dbReference type="PDB" id="7T7S">
    <property type="method" value="X-ray"/>
    <property type="resolution" value="2.20 A"/>
    <property type="chains" value="X=2-158"/>
</dbReference>
<dbReference type="PDBsum" id="2W9G"/>
<dbReference type="PDBsum" id="2W9H"/>
<dbReference type="PDBsum" id="3FRA"/>
<dbReference type="PDBsum" id="3FRB"/>
<dbReference type="PDBsum" id="3FRD"/>
<dbReference type="PDBsum" id="3FRE"/>
<dbReference type="PDBsum" id="3FRF"/>
<dbReference type="PDBsum" id="3FY8"/>
<dbReference type="PDBsum" id="3FY9"/>
<dbReference type="PDBsum" id="3FYV"/>
<dbReference type="PDBsum" id="3FYW"/>
<dbReference type="PDBsum" id="3I8A"/>
<dbReference type="PDBsum" id="3LG4"/>
<dbReference type="PDBsum" id="3M08"/>
<dbReference type="PDBsum" id="3M09"/>
<dbReference type="PDBsum" id="3SGY"/>
<dbReference type="PDBsum" id="3SH2"/>
<dbReference type="PDBsum" id="3SQY"/>
<dbReference type="PDBsum" id="3SR5"/>
<dbReference type="PDBsum" id="3SRQ"/>
<dbReference type="PDBsum" id="3SRR"/>
<dbReference type="PDBsum" id="3SRS"/>
<dbReference type="PDBsum" id="3SRU"/>
<dbReference type="PDBsum" id="3SRW"/>
<dbReference type="PDBsum" id="4FGG"/>
<dbReference type="PDBsum" id="4FGH"/>
<dbReference type="PDBsum" id="4LAE"/>
<dbReference type="PDBsum" id="4LAG"/>
<dbReference type="PDBsum" id="4LAH"/>
<dbReference type="PDBsum" id="4LEK"/>
<dbReference type="PDBsum" id="4XE6"/>
<dbReference type="PDBsum" id="4XEC"/>
<dbReference type="PDBsum" id="5HF0"/>
<dbReference type="PDBsum" id="5HF2"/>
<dbReference type="PDBsum" id="5ISP"/>
<dbReference type="PDBsum" id="5ISQ"/>
<dbReference type="PDBsum" id="5IST"/>
<dbReference type="PDBsum" id="5JG0"/>
<dbReference type="PDBsum" id="6E4E"/>
<dbReference type="PDBsum" id="6ND2"/>
<dbReference type="PDBsum" id="6P9Z"/>
<dbReference type="PDBsum" id="6PBO"/>
<dbReference type="PDBsum" id="6PR6"/>
<dbReference type="PDBsum" id="6PR7"/>
<dbReference type="PDBsum" id="6PR8"/>
<dbReference type="PDBsum" id="6PR9"/>
<dbReference type="PDBsum" id="6PRA"/>
<dbReference type="PDBsum" id="6PRB"/>
<dbReference type="PDBsum" id="6PRD"/>
<dbReference type="PDBsum" id="7T7Q"/>
<dbReference type="PDBsum" id="7T7S"/>
<dbReference type="BMRB" id="P0A017"/>
<dbReference type="SMR" id="P0A017"/>
<dbReference type="BindingDB" id="P0A017"/>
<dbReference type="ChEMBL" id="CHEMBL1681620"/>
<dbReference type="DrugBank" id="DB07938">
    <property type="generic name" value="(S)-iclaprim"/>
</dbReference>
<dbReference type="DrugBank" id="DB08234">
    <property type="generic name" value="5-[3-(2,5-dimethoxyphenyl)prop-1-yn-1-yl]-6-ethylpyrimidine-2,4-diamine"/>
</dbReference>
<dbReference type="DrugBank" id="DB08741">
    <property type="generic name" value="5-[[(2R)-2-cyclopropyl-7,8-dimethoxy-2H-chromen-5-yl]methyl]pyrimidine-2,4-diamine"/>
</dbReference>
<dbReference type="DrugCentral" id="P0A017"/>
<dbReference type="OMA" id="RDNQLPW"/>
<dbReference type="BRENDA" id="1.5.1.3">
    <property type="organism ID" value="3352"/>
</dbReference>
<dbReference type="UniPathway" id="UPA00077">
    <property type="reaction ID" value="UER00158"/>
</dbReference>
<dbReference type="EvolutionaryTrace" id="P0A017"/>
<dbReference type="PRO" id="PR:P0A017"/>
<dbReference type="GO" id="GO:0005829">
    <property type="term" value="C:cytosol"/>
    <property type="evidence" value="ECO:0007669"/>
    <property type="project" value="TreeGrafter"/>
</dbReference>
<dbReference type="GO" id="GO:0004146">
    <property type="term" value="F:dihydrofolate reductase activity"/>
    <property type="evidence" value="ECO:0007669"/>
    <property type="project" value="UniProtKB-EC"/>
</dbReference>
<dbReference type="GO" id="GO:0050661">
    <property type="term" value="F:NADP binding"/>
    <property type="evidence" value="ECO:0007669"/>
    <property type="project" value="InterPro"/>
</dbReference>
<dbReference type="GO" id="GO:0046452">
    <property type="term" value="P:dihydrofolate metabolic process"/>
    <property type="evidence" value="ECO:0007669"/>
    <property type="project" value="TreeGrafter"/>
</dbReference>
<dbReference type="GO" id="GO:0046655">
    <property type="term" value="P:folic acid metabolic process"/>
    <property type="evidence" value="ECO:0007669"/>
    <property type="project" value="TreeGrafter"/>
</dbReference>
<dbReference type="GO" id="GO:0006730">
    <property type="term" value="P:one-carbon metabolic process"/>
    <property type="evidence" value="ECO:0007669"/>
    <property type="project" value="UniProtKB-KW"/>
</dbReference>
<dbReference type="GO" id="GO:0046654">
    <property type="term" value="P:tetrahydrofolate biosynthetic process"/>
    <property type="evidence" value="ECO:0007669"/>
    <property type="project" value="UniProtKB-UniPathway"/>
</dbReference>
<dbReference type="CDD" id="cd00209">
    <property type="entry name" value="DHFR"/>
    <property type="match status" value="1"/>
</dbReference>
<dbReference type="FunFam" id="3.40.430.10:FF:000001">
    <property type="entry name" value="Dihydrofolate reductase"/>
    <property type="match status" value="1"/>
</dbReference>
<dbReference type="Gene3D" id="3.40.430.10">
    <property type="entry name" value="Dihydrofolate Reductase, subunit A"/>
    <property type="match status" value="1"/>
</dbReference>
<dbReference type="InterPro" id="IPR012259">
    <property type="entry name" value="DHFR"/>
</dbReference>
<dbReference type="InterPro" id="IPR024072">
    <property type="entry name" value="DHFR-like_dom_sf"/>
</dbReference>
<dbReference type="InterPro" id="IPR017925">
    <property type="entry name" value="DHFR_CS"/>
</dbReference>
<dbReference type="InterPro" id="IPR001796">
    <property type="entry name" value="DHFR_dom"/>
</dbReference>
<dbReference type="PANTHER" id="PTHR48069">
    <property type="entry name" value="DIHYDROFOLATE REDUCTASE"/>
    <property type="match status" value="1"/>
</dbReference>
<dbReference type="PANTHER" id="PTHR48069:SF3">
    <property type="entry name" value="DIHYDROFOLATE REDUCTASE"/>
    <property type="match status" value="1"/>
</dbReference>
<dbReference type="Pfam" id="PF00186">
    <property type="entry name" value="DHFR_1"/>
    <property type="match status" value="1"/>
</dbReference>
<dbReference type="PIRSF" id="PIRSF000194">
    <property type="entry name" value="DHFR"/>
    <property type="match status" value="1"/>
</dbReference>
<dbReference type="PRINTS" id="PR00070">
    <property type="entry name" value="DHFR"/>
</dbReference>
<dbReference type="SUPFAM" id="SSF53597">
    <property type="entry name" value="Dihydrofolate reductase-like"/>
    <property type="match status" value="1"/>
</dbReference>
<dbReference type="PROSITE" id="PS00075">
    <property type="entry name" value="DHFR_1"/>
    <property type="match status" value="1"/>
</dbReference>
<dbReference type="PROSITE" id="PS51330">
    <property type="entry name" value="DHFR_2"/>
    <property type="match status" value="1"/>
</dbReference>
<evidence type="ECO:0000255" key="1">
    <source>
        <dbReference type="PROSITE-ProRule" id="PRU00660"/>
    </source>
</evidence>
<evidence type="ECO:0000269" key="2">
    <source>
    </source>
</evidence>
<evidence type="ECO:0000269" key="3">
    <source>
    </source>
</evidence>
<evidence type="ECO:0000305" key="4"/>
<evidence type="ECO:0000305" key="5">
    <source>
    </source>
</evidence>
<evidence type="ECO:0007829" key="6">
    <source>
        <dbReference type="PDB" id="2W9H"/>
    </source>
</evidence>
<comment type="function">
    <text>Key enzyme in folate metabolism. Catalyzes an essential reaction for de novo glycine and purine synthesis, and for DNA precursor synthesis.</text>
</comment>
<comment type="catalytic activity">
    <reaction evidence="1">
        <text>(6S)-5,6,7,8-tetrahydrofolate + NADP(+) = 7,8-dihydrofolate + NADPH + H(+)</text>
        <dbReference type="Rhea" id="RHEA:15009"/>
        <dbReference type="ChEBI" id="CHEBI:15378"/>
        <dbReference type="ChEBI" id="CHEBI:57451"/>
        <dbReference type="ChEBI" id="CHEBI:57453"/>
        <dbReference type="ChEBI" id="CHEBI:57783"/>
        <dbReference type="ChEBI" id="CHEBI:58349"/>
        <dbReference type="EC" id="1.5.1.3"/>
    </reaction>
</comment>
<comment type="pathway">
    <text>Cofactor biosynthesis; tetrahydrofolate biosynthesis; 5,6,7,8-tetrahydrofolate from 7,8-dihydrofolate: step 1/1.</text>
</comment>
<comment type="miscellaneous">
    <text>There are two DhfR isozymes in S.aureus, this one is chromosomal and is sensitive to trimethoprim.</text>
</comment>
<comment type="similarity">
    <text evidence="4">Belongs to the dihydrofolate reductase family.</text>
</comment>
<sequence length="159" mass="18251">MTLSILVAHDLQRVIGFENQLPWHLPNDLKHVKKLSTGHTLVMGRKTFESIGKPLPNRRNVVLTSDTSFNVEGVDVIHSIEDIYQLPGHVFIFGGQTLFEEMIDKVDDMYITVIEGKFRGDTFFPPYTFEDWEVASSVEGKLDEKNTIPHTFLHLIRKK</sequence>
<proteinExistence type="evidence at protein level"/>
<name>DYR_STAAU</name>
<gene>
    <name type="primary">folA</name>
</gene>
<reference key="1">
    <citation type="journal article" date="1993" name="Antimicrob. Agents Chemother.">
        <title>Characterization of the gene for chromosomal trimethoprim-sensitive dihydrofolate reductase of Staphylococcus aureus ATCC 25923.</title>
        <authorList>
            <person name="Dale G.E."/>
            <person name="Then R.L."/>
            <person name="Stueber D."/>
        </authorList>
    </citation>
    <scope>NUCLEOTIDE SEQUENCE [GENOMIC DNA]</scope>
    <source>
        <strain>ATCC 25923 / DSM 1104 / JCM 2413 / NBRC 14462 / NCIMB 12702 / NCTC 12981 / Seattle 1945</strain>
    </source>
</reference>
<reference key="2">
    <citation type="journal article" date="1988" name="FEBS Lett.">
        <title>N-terminal amino acid sequence of the chromosomal dihydrofolate reductase purified from trimethoprim-resistant Staphylococcus aureus.</title>
        <authorList>
            <person name="Hartman P.G."/>
            <person name="Stahli M."/>
            <person name="Kocher H.P."/>
            <person name="Then R.L."/>
        </authorList>
    </citation>
    <scope>PROTEIN SEQUENCE OF 2-36</scope>
    <source>
        <strain>157/4696</strain>
    </source>
</reference>
<reference key="3">
    <citation type="journal article" date="2009" name="Acta Crystallogr. D">
        <title>Inhibitory properties and X-ray crystallographic study of the binding of AR-101, AR-102 and iclaprim in ternary complexes with NADPH and dihydrofolate reductase from Staphylococcus aureus.</title>
        <authorList>
            <person name="Oefner C."/>
            <person name="Parisi S."/>
            <person name="Schulz H."/>
            <person name="Lociuro S."/>
            <person name="Dale G.E."/>
        </authorList>
    </citation>
    <scope>X-RAY CRYSTALLOGRAPHY (2.1 ANGSTROMS) OF 2-159</scope>
</reference>
<reference key="4">
    <citation type="journal article" date="2009" name="Proteins">
        <title>Structural comparison of chromosomal and exogenous dihydrofolate reductase from Staphylococcus aureus in complex with the potent inhibitor trimethoprim.</title>
        <authorList>
            <person name="Heaslet H."/>
            <person name="Harris M."/>
            <person name="Fahnoe K."/>
            <person name="Sarver R."/>
            <person name="Putz H."/>
            <person name="Chang J."/>
            <person name="Subramanyam C."/>
            <person name="Barreiro G."/>
            <person name="Miller J.R."/>
        </authorList>
    </citation>
    <scope>X-RAY CRYSTALLOGRAPHY (1.48 ANGSTROMS) IN COMPLEX WITH NADPH AND TRIMETHOPRIM</scope>
</reference>
<organism>
    <name type="scientific">Staphylococcus aureus</name>
    <dbReference type="NCBI Taxonomy" id="1280"/>
    <lineage>
        <taxon>Bacteria</taxon>
        <taxon>Bacillati</taxon>
        <taxon>Bacillota</taxon>
        <taxon>Bacilli</taxon>
        <taxon>Bacillales</taxon>
        <taxon>Staphylococcaceae</taxon>
        <taxon>Staphylococcus</taxon>
    </lineage>
</organism>
<protein>
    <recommendedName>
        <fullName>Dihydrofolate reductase</fullName>
        <shortName>DHFR</shortName>
        <ecNumber>1.5.1.3</ecNumber>
    </recommendedName>
</protein>
<accession>P0A017</accession>
<accession>P10167</accession>
<keyword id="KW-0002">3D-structure</keyword>
<keyword id="KW-0903">Direct protein sequencing</keyword>
<keyword id="KW-0521">NADP</keyword>
<keyword id="KW-0554">One-carbon metabolism</keyword>
<keyword id="KW-0560">Oxidoreductase</keyword>
<feature type="initiator methionine" description="Removed" evidence="3">
    <location>
        <position position="1"/>
    </location>
</feature>
<feature type="chain" id="PRO_0000186411" description="Dihydrofolate reductase">
    <location>
        <begin position="2"/>
        <end position="159"/>
    </location>
</feature>
<feature type="domain" description="DHFR" evidence="1">
    <location>
        <begin position="2"/>
        <end position="157"/>
    </location>
</feature>
<feature type="binding site" evidence="5">
    <location>
        <begin position="6"/>
        <end position="7"/>
    </location>
    <ligand>
        <name>substrate</name>
    </ligand>
</feature>
<feature type="binding site" evidence="2">
    <location>
        <begin position="7"/>
        <end position="8"/>
    </location>
    <ligand>
        <name>NADP(+)</name>
        <dbReference type="ChEBI" id="CHEBI:58349"/>
    </ligand>
</feature>
<feature type="binding site" evidence="2">
    <location>
        <begin position="15"/>
        <end position="20"/>
    </location>
    <ligand>
        <name>NADP(+)</name>
        <dbReference type="ChEBI" id="CHEBI:58349"/>
    </ligand>
</feature>
<feature type="binding site" evidence="5">
    <location>
        <position position="28"/>
    </location>
    <ligand>
        <name>substrate</name>
    </ligand>
</feature>
<feature type="binding site" evidence="2">
    <location>
        <begin position="44"/>
        <end position="47"/>
    </location>
    <ligand>
        <name>NADP(+)</name>
        <dbReference type="ChEBI" id="CHEBI:58349"/>
    </ligand>
</feature>
<feature type="binding site" evidence="5">
    <location>
        <position position="50"/>
    </location>
    <ligand>
        <name>substrate</name>
    </ligand>
</feature>
<feature type="binding site" evidence="5">
    <location>
        <position position="58"/>
    </location>
    <ligand>
        <name>substrate</name>
    </ligand>
</feature>
<feature type="binding site" evidence="2">
    <location>
        <begin position="63"/>
        <end position="66"/>
    </location>
    <ligand>
        <name>NADP(+)</name>
        <dbReference type="ChEBI" id="CHEBI:58349"/>
    </ligand>
</feature>
<feature type="binding site" evidence="2">
    <location>
        <begin position="93"/>
        <end position="98"/>
    </location>
    <ligand>
        <name>NADP(+)</name>
        <dbReference type="ChEBI" id="CHEBI:58349"/>
    </ligand>
</feature>
<feature type="binding site" evidence="5">
    <location>
        <position position="93"/>
    </location>
    <ligand>
        <name>substrate</name>
    </ligand>
</feature>
<feature type="binding site" evidence="2">
    <location>
        <position position="101"/>
    </location>
    <ligand>
        <name>NADP(+)</name>
        <dbReference type="ChEBI" id="CHEBI:58349"/>
    </ligand>
</feature>
<feature type="binding site" evidence="2">
    <location>
        <position position="122"/>
    </location>
    <ligand>
        <name>NADP(+)</name>
        <dbReference type="ChEBI" id="CHEBI:58349"/>
    </ligand>
</feature>
<feature type="strand" evidence="6">
    <location>
        <begin position="3"/>
        <end position="10"/>
    </location>
</feature>
<feature type="strand" evidence="6">
    <location>
        <begin position="14"/>
        <end position="17"/>
    </location>
</feature>
<feature type="helix" evidence="6">
    <location>
        <begin position="26"/>
        <end position="36"/>
    </location>
</feature>
<feature type="strand" evidence="6">
    <location>
        <begin position="39"/>
        <end position="44"/>
    </location>
</feature>
<feature type="helix" evidence="6">
    <location>
        <begin position="45"/>
        <end position="51"/>
    </location>
</feature>
<feature type="strand" evidence="6">
    <location>
        <begin position="58"/>
        <end position="63"/>
    </location>
</feature>
<feature type="strand" evidence="6">
    <location>
        <begin position="75"/>
        <end position="77"/>
    </location>
</feature>
<feature type="helix" evidence="6">
    <location>
        <begin position="80"/>
        <end position="85"/>
    </location>
</feature>
<feature type="strand" evidence="6">
    <location>
        <begin position="90"/>
        <end position="94"/>
    </location>
</feature>
<feature type="helix" evidence="6">
    <location>
        <begin position="96"/>
        <end position="102"/>
    </location>
</feature>
<feature type="turn" evidence="6">
    <location>
        <begin position="103"/>
        <end position="105"/>
    </location>
</feature>
<feature type="strand" evidence="6">
    <location>
        <begin position="107"/>
        <end position="114"/>
    </location>
</feature>
<feature type="strand" evidence="6">
    <location>
        <begin position="121"/>
        <end position="123"/>
    </location>
</feature>
<feature type="turn" evidence="6">
    <location>
        <begin position="129"/>
        <end position="131"/>
    </location>
</feature>
<feature type="strand" evidence="6">
    <location>
        <begin position="132"/>
        <end position="139"/>
    </location>
</feature>
<feature type="strand" evidence="6">
    <location>
        <begin position="150"/>
        <end position="157"/>
    </location>
</feature>